<evidence type="ECO:0000255" key="1">
    <source>
        <dbReference type="HAMAP-Rule" id="MF_00758"/>
    </source>
</evidence>
<accession>B2I2L3</accession>
<organism>
    <name type="scientific">Acinetobacter baumannii (strain ACICU)</name>
    <dbReference type="NCBI Taxonomy" id="405416"/>
    <lineage>
        <taxon>Bacteria</taxon>
        <taxon>Pseudomonadati</taxon>
        <taxon>Pseudomonadota</taxon>
        <taxon>Gammaproteobacteria</taxon>
        <taxon>Moraxellales</taxon>
        <taxon>Moraxellaceae</taxon>
        <taxon>Acinetobacter</taxon>
        <taxon>Acinetobacter calcoaceticus/baumannii complex</taxon>
    </lineage>
</organism>
<proteinExistence type="inferred from homology"/>
<protein>
    <recommendedName>
        <fullName evidence="1">UPF0301 protein ACICU_00336</fullName>
    </recommendedName>
</protein>
<feature type="chain" id="PRO_1000198246" description="UPF0301 protein ACICU_00336">
    <location>
        <begin position="1"/>
        <end position="184"/>
    </location>
</feature>
<sequence>MTKQYMTHRCLIAPPEMADDFFANTVIYLARHDEEGAQGIIINRPAGIQIKELLNDLDIDADNVNPHEVLQGGPLRPEAGFVLHTGQPTWHSSIAVGENVCITTSKDILDAIAHNEGVGRYQIALGYASWGKNQLEDEIARGDWLICDADMDLIFNLPYDDRWDAAYKKIGVDRTWLASEIGHA</sequence>
<comment type="similarity">
    <text evidence="1">Belongs to the UPF0301 (AlgH) family.</text>
</comment>
<dbReference type="EMBL" id="CP000863">
    <property type="protein sequence ID" value="ACC55648.1"/>
    <property type="molecule type" value="Genomic_DNA"/>
</dbReference>
<dbReference type="RefSeq" id="WP_001979301.1">
    <property type="nucleotide sequence ID" value="NZ_CP031380.1"/>
</dbReference>
<dbReference type="SMR" id="B2I2L3"/>
<dbReference type="KEGG" id="abc:ACICU_00336"/>
<dbReference type="HOGENOM" id="CLU_057596_1_0_6"/>
<dbReference type="Proteomes" id="UP000008839">
    <property type="component" value="Chromosome"/>
</dbReference>
<dbReference type="GO" id="GO:0005829">
    <property type="term" value="C:cytosol"/>
    <property type="evidence" value="ECO:0007669"/>
    <property type="project" value="TreeGrafter"/>
</dbReference>
<dbReference type="Gene3D" id="3.40.1740.10">
    <property type="entry name" value="VC0467-like"/>
    <property type="match status" value="1"/>
</dbReference>
<dbReference type="HAMAP" id="MF_00758">
    <property type="entry name" value="UPF0301"/>
    <property type="match status" value="1"/>
</dbReference>
<dbReference type="InterPro" id="IPR003774">
    <property type="entry name" value="AlgH-like"/>
</dbReference>
<dbReference type="NCBIfam" id="NF001266">
    <property type="entry name" value="PRK00228.1-1"/>
    <property type="match status" value="1"/>
</dbReference>
<dbReference type="PANTHER" id="PTHR30327">
    <property type="entry name" value="UNCHARACTERIZED PROTEIN YQGE"/>
    <property type="match status" value="1"/>
</dbReference>
<dbReference type="PANTHER" id="PTHR30327:SF1">
    <property type="entry name" value="UPF0301 PROTEIN YQGE"/>
    <property type="match status" value="1"/>
</dbReference>
<dbReference type="Pfam" id="PF02622">
    <property type="entry name" value="DUF179"/>
    <property type="match status" value="1"/>
</dbReference>
<dbReference type="SUPFAM" id="SSF143456">
    <property type="entry name" value="VC0467-like"/>
    <property type="match status" value="1"/>
</dbReference>
<name>Y336_ACIBC</name>
<reference key="1">
    <citation type="journal article" date="2008" name="Antimicrob. Agents Chemother.">
        <title>Whole-genome pyrosequencing of an epidemic multidrug-resistant Acinetobacter baumannii strain belonging to the European clone II group.</title>
        <authorList>
            <person name="Iacono M."/>
            <person name="Villa L."/>
            <person name="Fortini D."/>
            <person name="Bordoni R."/>
            <person name="Imperi F."/>
            <person name="Bonnal R.J."/>
            <person name="Sicheritz-Ponten T."/>
            <person name="De Bellis G."/>
            <person name="Visca P."/>
            <person name="Cassone A."/>
            <person name="Carattoli A."/>
        </authorList>
    </citation>
    <scope>NUCLEOTIDE SEQUENCE [LARGE SCALE GENOMIC DNA]</scope>
    <source>
        <strain>ACICU</strain>
    </source>
</reference>
<gene>
    <name type="ordered locus">ACICU_00336</name>
</gene>